<organism>
    <name type="scientific">Callithrix jacchus</name>
    <name type="common">White-tufted-ear marmoset</name>
    <dbReference type="NCBI Taxonomy" id="9483"/>
    <lineage>
        <taxon>Eukaryota</taxon>
        <taxon>Metazoa</taxon>
        <taxon>Chordata</taxon>
        <taxon>Craniata</taxon>
        <taxon>Vertebrata</taxon>
        <taxon>Euteleostomi</taxon>
        <taxon>Mammalia</taxon>
        <taxon>Eutheria</taxon>
        <taxon>Euarchontoglires</taxon>
        <taxon>Primates</taxon>
        <taxon>Haplorrhini</taxon>
        <taxon>Platyrrhini</taxon>
        <taxon>Cebidae</taxon>
        <taxon>Callitrichinae</taxon>
        <taxon>Callithrix</taxon>
        <taxon>Callithrix</taxon>
    </lineage>
</organism>
<evidence type="ECO:0000250" key="1"/>
<evidence type="ECO:0000255" key="2"/>
<evidence type="ECO:0000255" key="3">
    <source>
        <dbReference type="PROSITE-ProRule" id="PRU00114"/>
    </source>
</evidence>
<evidence type="ECO:0000303" key="4">
    <source>
    </source>
</evidence>
<evidence type="ECO:0000305" key="5"/>
<sequence length="245" mass="27920">MASLSKPSLPSYLCFLLLLLHVSSSYGGQFRVIGPSHPIQALVGDAAELPCRISPGKNATGMEVGWYRSPFSRVVHLYRNGKDQDGEQAPEYRGRTELLKDDIGEGKVTLKIRNVRFPDEGGFTCFFRDHSYQEEAAMQLKVEDPFYWVSPGVLVLLAVLPVLFLQITVGLVFLYLQHRLRGKLRAEIENLHRTFDPHFLRVPCWKITLFVIVPVLGPLVALIICYNWLHRRLAGQFLEELRNPF</sequence>
<dbReference type="EMBL" id="AY566834">
    <property type="protein sequence ID" value="AAU09333.1"/>
    <property type="molecule type" value="mRNA"/>
</dbReference>
<dbReference type="EMBL" id="AY566835">
    <property type="protein sequence ID" value="AAU09334.1"/>
    <property type="molecule type" value="mRNA"/>
</dbReference>
<dbReference type="EMBL" id="AY566836">
    <property type="protein sequence ID" value="AAU09335.1"/>
    <property type="molecule type" value="mRNA"/>
</dbReference>
<dbReference type="EMBL" id="AY566837">
    <property type="protein sequence ID" value="AAU09336.1"/>
    <property type="molecule type" value="mRNA"/>
</dbReference>
<dbReference type="RefSeq" id="NP_001244171.1">
    <molecule id="Q29ZQ1-1"/>
    <property type="nucleotide sequence ID" value="NM_001257242.1"/>
</dbReference>
<dbReference type="RefSeq" id="NP_001244172.1">
    <molecule id="Q29ZQ1-2"/>
    <property type="nucleotide sequence ID" value="NM_001257243.1"/>
</dbReference>
<dbReference type="RefSeq" id="NP_001244173.1">
    <property type="nucleotide sequence ID" value="NM_001257244.1"/>
</dbReference>
<dbReference type="SMR" id="Q29ZQ1"/>
<dbReference type="FunCoup" id="Q29ZQ1">
    <property type="interactions" value="409"/>
</dbReference>
<dbReference type="STRING" id="9483.ENSCJAP00000052541"/>
<dbReference type="GlyCosmos" id="Q29ZQ1">
    <property type="glycosylation" value="1 site, No reported glycans"/>
</dbReference>
<dbReference type="GeneID" id="100400400"/>
<dbReference type="KEGG" id="cjc:100400400"/>
<dbReference type="CTD" id="4340"/>
<dbReference type="eggNOG" id="ENOG502SQC1">
    <property type="taxonomic scope" value="Eukaryota"/>
</dbReference>
<dbReference type="HOGENOM" id="CLU_013137_10_4_1"/>
<dbReference type="InParanoid" id="Q29ZQ1"/>
<dbReference type="OrthoDB" id="9049620at2759"/>
<dbReference type="Proteomes" id="UP000008225">
    <property type="component" value="Chromosome 4"/>
</dbReference>
<dbReference type="Bgee" id="ENSCJAG00000043626">
    <property type="expression patterns" value="Expressed in cerebellum and 1 other cell type or tissue"/>
</dbReference>
<dbReference type="GO" id="GO:0009897">
    <property type="term" value="C:external side of plasma membrane"/>
    <property type="evidence" value="ECO:0007669"/>
    <property type="project" value="TreeGrafter"/>
</dbReference>
<dbReference type="GO" id="GO:0005102">
    <property type="term" value="F:signaling receptor binding"/>
    <property type="evidence" value="ECO:0007669"/>
    <property type="project" value="TreeGrafter"/>
</dbReference>
<dbReference type="GO" id="GO:0007155">
    <property type="term" value="P:cell adhesion"/>
    <property type="evidence" value="ECO:0007669"/>
    <property type="project" value="UniProtKB-KW"/>
</dbReference>
<dbReference type="GO" id="GO:0001817">
    <property type="term" value="P:regulation of cytokine production"/>
    <property type="evidence" value="ECO:0007669"/>
    <property type="project" value="TreeGrafter"/>
</dbReference>
<dbReference type="GO" id="GO:0050852">
    <property type="term" value="P:T cell receptor signaling pathway"/>
    <property type="evidence" value="ECO:0007669"/>
    <property type="project" value="TreeGrafter"/>
</dbReference>
<dbReference type="CDD" id="cd05713">
    <property type="entry name" value="IgV_MOG_like"/>
    <property type="match status" value="1"/>
</dbReference>
<dbReference type="FunFam" id="2.60.40.10:FF:000183">
    <property type="entry name" value="Myelin-oligodendrocyte glycoprotein"/>
    <property type="match status" value="1"/>
</dbReference>
<dbReference type="Gene3D" id="2.60.40.10">
    <property type="entry name" value="Immunoglobulins"/>
    <property type="match status" value="1"/>
</dbReference>
<dbReference type="InterPro" id="IPR007110">
    <property type="entry name" value="Ig-like_dom"/>
</dbReference>
<dbReference type="InterPro" id="IPR036179">
    <property type="entry name" value="Ig-like_dom_sf"/>
</dbReference>
<dbReference type="InterPro" id="IPR013783">
    <property type="entry name" value="Ig-like_fold"/>
</dbReference>
<dbReference type="InterPro" id="IPR003599">
    <property type="entry name" value="Ig_sub"/>
</dbReference>
<dbReference type="InterPro" id="IPR013106">
    <property type="entry name" value="Ig_V-set"/>
</dbReference>
<dbReference type="InterPro" id="IPR050504">
    <property type="entry name" value="IgSF_BTN/MOG"/>
</dbReference>
<dbReference type="InterPro" id="IPR016663">
    <property type="entry name" value="Myelin-oligodendrocyte_glycop"/>
</dbReference>
<dbReference type="PANTHER" id="PTHR24100">
    <property type="entry name" value="BUTYROPHILIN"/>
    <property type="match status" value="1"/>
</dbReference>
<dbReference type="PANTHER" id="PTHR24100:SF71">
    <property type="entry name" value="MYELIN-OLIGODENDROCYTE GLYCOPROTEIN"/>
    <property type="match status" value="1"/>
</dbReference>
<dbReference type="Pfam" id="PF07686">
    <property type="entry name" value="V-set"/>
    <property type="match status" value="1"/>
</dbReference>
<dbReference type="PIRSF" id="PIRSF016522">
    <property type="entry name" value="MOG"/>
    <property type="match status" value="1"/>
</dbReference>
<dbReference type="SMART" id="SM00409">
    <property type="entry name" value="IG"/>
    <property type="match status" value="1"/>
</dbReference>
<dbReference type="SMART" id="SM00406">
    <property type="entry name" value="IGv"/>
    <property type="match status" value="1"/>
</dbReference>
<dbReference type="SUPFAM" id="SSF48726">
    <property type="entry name" value="Immunoglobulin"/>
    <property type="match status" value="1"/>
</dbReference>
<dbReference type="PROSITE" id="PS50835">
    <property type="entry name" value="IG_LIKE"/>
    <property type="match status" value="1"/>
</dbReference>
<keyword id="KW-0025">Alternative splicing</keyword>
<keyword id="KW-0130">Cell adhesion</keyword>
<keyword id="KW-1015">Disulfide bond</keyword>
<keyword id="KW-0325">Glycoprotein</keyword>
<keyword id="KW-0393">Immunoglobulin domain</keyword>
<keyword id="KW-0472">Membrane</keyword>
<keyword id="KW-1185">Reference proteome</keyword>
<keyword id="KW-0732">Signal</keyword>
<keyword id="KW-0812">Transmembrane</keyword>
<keyword id="KW-1133">Transmembrane helix</keyword>
<protein>
    <recommendedName>
        <fullName>Myelin-oligodendrocyte glycoprotein</fullName>
    </recommendedName>
</protein>
<proteinExistence type="evidence at transcript level"/>
<comment type="function">
    <text evidence="1">Minor component of the myelin sheath. May be involved in completion and/or maintenance of the myelin sheath and in cell-cell communication. Mediates homophilic cell-cell adhesion (By similarity).</text>
</comment>
<comment type="subunit">
    <text evidence="1">Homodimer.</text>
</comment>
<comment type="subcellular location">
    <subcellularLocation>
        <location evidence="5">Membrane</location>
        <topology evidence="5">Multi-pass membrane protein</topology>
    </subcellularLocation>
</comment>
<comment type="alternative products">
    <event type="alternative splicing"/>
    <isoform>
        <id>Q29ZQ1-1</id>
        <name>1</name>
        <sequence type="displayed"/>
    </isoform>
    <isoform>
        <id>Q29ZQ1-2</id>
        <name>2</name>
        <name>MOG alpha-4</name>
        <sequence type="described" ref="VSP_022786"/>
    </isoform>
    <isoform>
        <id>Q29ZQ1-3</id>
        <name>3</name>
        <name>MOG alpha-7Cj</name>
        <sequence type="described" ref="VSP_022789"/>
    </isoform>
    <isoform>
        <id>Q29ZQ1-4</id>
        <name>4</name>
        <name>MOG alpha-4Cj</name>
        <sequence type="described" ref="VSP_022787 VSP_022788"/>
    </isoform>
</comment>
<comment type="similarity">
    <text evidence="5">Belongs to the immunoglobulin superfamily. BTN/MOG family.</text>
</comment>
<comment type="caution">
    <text evidence="5">Do not confuse myelin-oligodendrocyte glycoprotein (MOG) with oligodendrocyte-myelin glycoprotein (OMG).</text>
</comment>
<name>MOG_CALJA</name>
<feature type="signal peptide" evidence="2">
    <location>
        <begin position="1"/>
        <end position="27"/>
    </location>
</feature>
<feature type="chain" id="PRO_0000274528" description="Myelin-oligodendrocyte glycoprotein">
    <location>
        <begin position="28"/>
        <end position="245"/>
    </location>
</feature>
<feature type="topological domain" description="Extracellular" evidence="2">
    <location>
        <begin position="28"/>
        <end position="152"/>
    </location>
</feature>
<feature type="transmembrane region" description="Helical" evidence="2">
    <location>
        <begin position="153"/>
        <end position="173"/>
    </location>
</feature>
<feature type="topological domain" description="Cytoplasmic" evidence="2">
    <location>
        <begin position="174"/>
        <end position="208"/>
    </location>
</feature>
<feature type="transmembrane region" description="Helical" evidence="2">
    <location>
        <begin position="209"/>
        <end position="229"/>
    </location>
</feature>
<feature type="topological domain" description="Extracellular" evidence="2">
    <location>
        <begin position="230"/>
        <end position="245"/>
    </location>
</feature>
<feature type="domain" description="Ig-like V-type">
    <location>
        <begin position="29"/>
        <end position="143"/>
    </location>
</feature>
<feature type="glycosylation site" description="N-linked (GlcNAc...) asparagine" evidence="2">
    <location>
        <position position="58"/>
    </location>
</feature>
<feature type="disulfide bond" evidence="3">
    <location>
        <begin position="51"/>
        <end position="125"/>
    </location>
</feature>
<feature type="splice variant" id="VSP_022786" description="In isoform 2." evidence="4">
    <location>
        <begin position="28"/>
        <end position="143"/>
    </location>
</feature>
<feature type="splice variant" id="VSP_022787" description="In isoform 4." evidence="4">
    <original>GQFRVIGPSHPIQALVGDAA</original>
    <variation>EMARIKMESRHLNIGVEQSC</variation>
    <location>
        <begin position="28"/>
        <end position="47"/>
    </location>
</feature>
<feature type="splice variant" id="VSP_022788" description="In isoform 4." evidence="4">
    <location>
        <begin position="48"/>
        <end position="245"/>
    </location>
</feature>
<feature type="splice variant" id="VSP_022789" description="In isoform 3." evidence="4">
    <location>
        <begin position="139"/>
        <end position="176"/>
    </location>
</feature>
<gene>
    <name type="primary">MOG</name>
</gene>
<reference key="1">
    <citation type="journal article" date="2006" name="J. Neurochem.">
        <title>Complex alternative splicing of the myelin oligodendrocyte glycoprotein gene is unique to human and non-human primates.</title>
        <authorList>
            <person name="Delarasse C."/>
            <person name="Della Gaspera B."/>
            <person name="Lu C.W."/>
            <person name="Lachapelle F."/>
            <person name="Gelot A."/>
            <person name="Rodriguez D."/>
            <person name="Dautigny A."/>
            <person name="Genain C."/>
            <person name="Pham-Dinh D."/>
        </authorList>
    </citation>
    <scope>NUCLEOTIDE SEQUENCE [MRNA] (ISOFORMS 1; 2; 3 AND 4)</scope>
</reference>
<accession>Q29ZQ1</accession>
<accession>Q29ZP8</accession>
<accession>Q29ZP9</accession>
<accession>Q29ZQ0</accession>